<dbReference type="EC" id="7.1.1.-" evidence="1"/>
<dbReference type="EMBL" id="AE006914">
    <property type="protein sequence ID" value="AAL03763.1"/>
    <property type="molecule type" value="Genomic_DNA"/>
</dbReference>
<dbReference type="PIR" id="A97853">
    <property type="entry name" value="A97853"/>
</dbReference>
<dbReference type="SMR" id="Q92G98"/>
<dbReference type="KEGG" id="rco:RC1225"/>
<dbReference type="HOGENOM" id="CLU_144724_2_0_5"/>
<dbReference type="Proteomes" id="UP000000816">
    <property type="component" value="Chromosome"/>
</dbReference>
<dbReference type="GO" id="GO:0030964">
    <property type="term" value="C:NADH dehydrogenase complex"/>
    <property type="evidence" value="ECO:0007669"/>
    <property type="project" value="TreeGrafter"/>
</dbReference>
<dbReference type="GO" id="GO:0005886">
    <property type="term" value="C:plasma membrane"/>
    <property type="evidence" value="ECO:0007669"/>
    <property type="project" value="UniProtKB-SubCell"/>
</dbReference>
<dbReference type="GO" id="GO:0050136">
    <property type="term" value="F:NADH:ubiquinone reductase (non-electrogenic) activity"/>
    <property type="evidence" value="ECO:0007669"/>
    <property type="project" value="UniProtKB-UniRule"/>
</dbReference>
<dbReference type="GO" id="GO:0048038">
    <property type="term" value="F:quinone binding"/>
    <property type="evidence" value="ECO:0007669"/>
    <property type="project" value="UniProtKB-KW"/>
</dbReference>
<dbReference type="GO" id="GO:0042773">
    <property type="term" value="P:ATP synthesis coupled electron transport"/>
    <property type="evidence" value="ECO:0007669"/>
    <property type="project" value="InterPro"/>
</dbReference>
<dbReference type="FunFam" id="1.10.287.3510:FF:000001">
    <property type="entry name" value="NADH-quinone oxidoreductase subunit K"/>
    <property type="match status" value="1"/>
</dbReference>
<dbReference type="Gene3D" id="1.10.287.3510">
    <property type="match status" value="1"/>
</dbReference>
<dbReference type="HAMAP" id="MF_01456">
    <property type="entry name" value="NDH1_NuoK"/>
    <property type="match status" value="1"/>
</dbReference>
<dbReference type="InterPro" id="IPR001133">
    <property type="entry name" value="NADH_UbQ_OxRdtase_chain4L/K"/>
</dbReference>
<dbReference type="InterPro" id="IPR039428">
    <property type="entry name" value="NUOK/Mnh_C1-like"/>
</dbReference>
<dbReference type="NCBIfam" id="NF004320">
    <property type="entry name" value="PRK05715.1-2"/>
    <property type="match status" value="1"/>
</dbReference>
<dbReference type="NCBIfam" id="NF004321">
    <property type="entry name" value="PRK05715.1-3"/>
    <property type="match status" value="1"/>
</dbReference>
<dbReference type="NCBIfam" id="NF004323">
    <property type="entry name" value="PRK05715.1-5"/>
    <property type="match status" value="1"/>
</dbReference>
<dbReference type="PANTHER" id="PTHR11434:SF21">
    <property type="entry name" value="NADH DEHYDROGENASE SUBUNIT 4L-RELATED"/>
    <property type="match status" value="1"/>
</dbReference>
<dbReference type="PANTHER" id="PTHR11434">
    <property type="entry name" value="NADH-UBIQUINONE OXIDOREDUCTASE SUBUNIT ND4L"/>
    <property type="match status" value="1"/>
</dbReference>
<dbReference type="Pfam" id="PF00420">
    <property type="entry name" value="Oxidored_q2"/>
    <property type="match status" value="1"/>
</dbReference>
<gene>
    <name evidence="1" type="primary">nuoK</name>
    <name type="ordered locus">RC1225</name>
</gene>
<feature type="chain" id="PRO_0000118534" description="NADH-quinone oxidoreductase subunit K">
    <location>
        <begin position="1"/>
        <end position="110"/>
    </location>
</feature>
<feature type="transmembrane region" description="Helical" evidence="1">
    <location>
        <begin position="13"/>
        <end position="33"/>
    </location>
</feature>
<feature type="transmembrane region" description="Helical" evidence="1">
    <location>
        <begin position="41"/>
        <end position="61"/>
    </location>
</feature>
<feature type="transmembrane region" description="Helical" evidence="1">
    <location>
        <begin position="73"/>
        <end position="93"/>
    </location>
</feature>
<organism>
    <name type="scientific">Rickettsia conorii (strain ATCC VR-613 / Malish 7)</name>
    <dbReference type="NCBI Taxonomy" id="272944"/>
    <lineage>
        <taxon>Bacteria</taxon>
        <taxon>Pseudomonadati</taxon>
        <taxon>Pseudomonadota</taxon>
        <taxon>Alphaproteobacteria</taxon>
        <taxon>Rickettsiales</taxon>
        <taxon>Rickettsiaceae</taxon>
        <taxon>Rickettsieae</taxon>
        <taxon>Rickettsia</taxon>
        <taxon>spotted fever group</taxon>
    </lineage>
</organism>
<proteinExistence type="inferred from homology"/>
<evidence type="ECO:0000255" key="1">
    <source>
        <dbReference type="HAMAP-Rule" id="MF_01456"/>
    </source>
</evidence>
<sequence>MLRILNMNEYISLNHYLILSSLVFTIGMFGLFMHRKNIINILMSIELMLLAVNINFVAFSIYMQELSGQIFSIIILTVAAAETSIGLAILLIYFRNKGSIEITDINQMWG</sequence>
<protein>
    <recommendedName>
        <fullName evidence="1">NADH-quinone oxidoreductase subunit K</fullName>
        <ecNumber evidence="1">7.1.1.-</ecNumber>
    </recommendedName>
    <alternativeName>
        <fullName evidence="1">NADH dehydrogenase I subunit K</fullName>
    </alternativeName>
    <alternativeName>
        <fullName evidence="1">NDH-1 subunit K</fullName>
    </alternativeName>
</protein>
<accession>Q92G98</accession>
<keyword id="KW-0997">Cell inner membrane</keyword>
<keyword id="KW-1003">Cell membrane</keyword>
<keyword id="KW-0472">Membrane</keyword>
<keyword id="KW-0520">NAD</keyword>
<keyword id="KW-0874">Quinone</keyword>
<keyword id="KW-1278">Translocase</keyword>
<keyword id="KW-0812">Transmembrane</keyword>
<keyword id="KW-1133">Transmembrane helix</keyword>
<keyword id="KW-0813">Transport</keyword>
<name>NUOK_RICCN</name>
<reference key="1">
    <citation type="journal article" date="2001" name="Science">
        <title>Mechanisms of evolution in Rickettsia conorii and R. prowazekii.</title>
        <authorList>
            <person name="Ogata H."/>
            <person name="Audic S."/>
            <person name="Renesto-Audiffren P."/>
            <person name="Fournier P.-E."/>
            <person name="Barbe V."/>
            <person name="Samson D."/>
            <person name="Roux V."/>
            <person name="Cossart P."/>
            <person name="Weissenbach J."/>
            <person name="Claverie J.-M."/>
            <person name="Raoult D."/>
        </authorList>
    </citation>
    <scope>NUCLEOTIDE SEQUENCE [LARGE SCALE GENOMIC DNA]</scope>
    <source>
        <strain>ATCC VR-613 / Malish 7</strain>
    </source>
</reference>
<comment type="function">
    <text evidence="1">NDH-1 shuttles electrons from NADH, via FMN and iron-sulfur (Fe-S) centers, to quinones in the respiratory chain. The immediate electron acceptor for the enzyme in this species is believed to be ubiquinone. Couples the redox reaction to proton translocation (for every two electrons transferred, four hydrogen ions are translocated across the cytoplasmic membrane), and thus conserves the redox energy in a proton gradient.</text>
</comment>
<comment type="catalytic activity">
    <reaction evidence="1">
        <text>a quinone + NADH + 5 H(+)(in) = a quinol + NAD(+) + 4 H(+)(out)</text>
        <dbReference type="Rhea" id="RHEA:57888"/>
        <dbReference type="ChEBI" id="CHEBI:15378"/>
        <dbReference type="ChEBI" id="CHEBI:24646"/>
        <dbReference type="ChEBI" id="CHEBI:57540"/>
        <dbReference type="ChEBI" id="CHEBI:57945"/>
        <dbReference type="ChEBI" id="CHEBI:132124"/>
    </reaction>
</comment>
<comment type="subunit">
    <text evidence="1">NDH-1 is composed of 14 different subunits. Subunits NuoA, H, J, K, L, M, N constitute the membrane sector of the complex.</text>
</comment>
<comment type="subcellular location">
    <subcellularLocation>
        <location evidence="1">Cell inner membrane</location>
        <topology evidence="1">Multi-pass membrane protein</topology>
    </subcellularLocation>
</comment>
<comment type="similarity">
    <text evidence="1">Belongs to the complex I subunit 4L family.</text>
</comment>